<comment type="function">
    <text evidence="1">Component of the DNA-dependent RNA polymerase that catalyzes the transcription in the cytoplasm of viral DNA into RNA using the four ribonucleoside triphosphates as substrates.</text>
</comment>
<comment type="catalytic activity">
    <reaction>
        <text>RNA(n) + a ribonucleoside 5'-triphosphate = RNA(n+1) + diphosphate</text>
        <dbReference type="Rhea" id="RHEA:21248"/>
        <dbReference type="Rhea" id="RHEA-COMP:14527"/>
        <dbReference type="Rhea" id="RHEA-COMP:17342"/>
        <dbReference type="ChEBI" id="CHEBI:33019"/>
        <dbReference type="ChEBI" id="CHEBI:61557"/>
        <dbReference type="ChEBI" id="CHEBI:140395"/>
        <dbReference type="EC" id="2.7.7.6"/>
    </reaction>
</comment>
<comment type="similarity">
    <text evidence="2">Belongs to the RNA polymerase beta' chain family.</text>
</comment>
<feature type="chain" id="PRO_0000377496" description="Probable DNA-directed RNA polymerase subunit 343L">
    <location>
        <begin position="1"/>
        <end position="462"/>
    </location>
</feature>
<protein>
    <recommendedName>
        <fullName>Probable DNA-directed RNA polymerase subunit 343L</fullName>
        <ecNumber>2.7.7.6</ecNumber>
    </recommendedName>
</protein>
<name>343L_IIV6</name>
<reference key="1">
    <citation type="journal article" date="2001" name="Virology">
        <title>Analysis of the first complete DNA sequence of an invertebrate iridovirus: coding strategy of the genome of Chilo iridescent virus.</title>
        <authorList>
            <person name="Jakob N.J."/>
            <person name="Mueller K."/>
            <person name="Bahr U."/>
            <person name="Darai G."/>
        </authorList>
    </citation>
    <scope>NUCLEOTIDE SEQUENCE [LARGE SCALE GENOMIC DNA]</scope>
</reference>
<reference key="2">
    <citation type="journal article" date="2007" name="Virol. J.">
        <title>Comparative genomic analysis of the family Iridoviridae: re-annotating and defining the core set of iridovirus genes.</title>
        <authorList>
            <person name="Eaton H.E."/>
            <person name="Metcalf J."/>
            <person name="Penny E."/>
            <person name="Tcherepanov V."/>
            <person name="Upton C."/>
            <person name="Brunetti C.R."/>
        </authorList>
    </citation>
    <scope>GENOME REANNOTATION</scope>
</reference>
<dbReference type="EC" id="2.7.7.6"/>
<dbReference type="EMBL" id="AF303741">
    <property type="protein sequence ID" value="AAK82204.1"/>
    <property type="molecule type" value="Genomic_DNA"/>
</dbReference>
<dbReference type="RefSeq" id="NP_149806.1">
    <property type="nucleotide sequence ID" value="NC_003038.1"/>
</dbReference>
<dbReference type="SMR" id="Q91FI1"/>
<dbReference type="KEGG" id="vg:1733090"/>
<dbReference type="OrthoDB" id="8996at10239"/>
<dbReference type="Proteomes" id="UP000001359">
    <property type="component" value="Genome"/>
</dbReference>
<dbReference type="GO" id="GO:0000428">
    <property type="term" value="C:DNA-directed RNA polymerase complex"/>
    <property type="evidence" value="ECO:0007669"/>
    <property type="project" value="UniProtKB-KW"/>
</dbReference>
<dbReference type="GO" id="GO:0003677">
    <property type="term" value="F:DNA binding"/>
    <property type="evidence" value="ECO:0007669"/>
    <property type="project" value="InterPro"/>
</dbReference>
<dbReference type="GO" id="GO:0003899">
    <property type="term" value="F:DNA-directed RNA polymerase activity"/>
    <property type="evidence" value="ECO:0007669"/>
    <property type="project" value="UniProtKB-EC"/>
</dbReference>
<dbReference type="GO" id="GO:0006351">
    <property type="term" value="P:DNA-templated transcription"/>
    <property type="evidence" value="ECO:0007669"/>
    <property type="project" value="InterPro"/>
</dbReference>
<dbReference type="Gene3D" id="1.10.150.390">
    <property type="match status" value="1"/>
</dbReference>
<dbReference type="InterPro" id="IPR045867">
    <property type="entry name" value="DNA-dir_RpoC_beta_prime"/>
</dbReference>
<dbReference type="InterPro" id="IPR007081">
    <property type="entry name" value="RNA_pol_Rpb1_5"/>
</dbReference>
<dbReference type="PANTHER" id="PTHR19376">
    <property type="entry name" value="DNA-DIRECTED RNA POLYMERASE"/>
    <property type="match status" value="1"/>
</dbReference>
<dbReference type="PANTHER" id="PTHR19376:SF32">
    <property type="entry name" value="DNA-DIRECTED RNA POLYMERASE III SUBUNIT RPC1"/>
    <property type="match status" value="1"/>
</dbReference>
<dbReference type="Pfam" id="PF04998">
    <property type="entry name" value="RNA_pol_Rpb1_5"/>
    <property type="match status" value="1"/>
</dbReference>
<dbReference type="SUPFAM" id="SSF64484">
    <property type="entry name" value="beta and beta-prime subunits of DNA dependent RNA-polymerase"/>
    <property type="match status" value="1"/>
</dbReference>
<organismHost>
    <name type="scientific">Acheta domesticus</name>
    <name type="common">House cricket</name>
    <dbReference type="NCBI Taxonomy" id="6997"/>
</organismHost>
<organismHost>
    <name type="scientific">Chilo suppressalis</name>
    <name type="common">Asiatic rice borer moth</name>
    <dbReference type="NCBI Taxonomy" id="168631"/>
</organismHost>
<organismHost>
    <name type="scientific">Gryllus bimaculatus</name>
    <name type="common">Two-spotted cricket</name>
    <dbReference type="NCBI Taxonomy" id="6999"/>
</organismHost>
<organismHost>
    <name type="scientific">Gryllus campestris</name>
    <dbReference type="NCBI Taxonomy" id="58607"/>
</organismHost>
<organismHost>
    <name type="scientific">Spodoptera frugiperda</name>
    <name type="common">Fall armyworm</name>
    <dbReference type="NCBI Taxonomy" id="7108"/>
</organismHost>
<proteinExistence type="inferred from homology"/>
<sequence length="462" mass="53326">MELKNMELKRKLTINEINFIVDFIQPRPYIPPDIENAIIFKKKKGIIDQLVTIEIYESLIPKLKEEIEKQYVNSLIDPGECVGIIGAQSMGEYSTQATLNTFHVAGVDTGSSTGVSRFQDLINASKTVKIDNISLFFKPLFVKKNITELRKLVASKLIEVKLSHLMITSVIVKTEEISQYRQEIESCIELYNDEHFNYEDYEFCLKITLSRELLLKHRLHPSVIKNKLEEYNNDCKYAFLPISSQQILFFIFIYVNTDECIEKIIQDLMDKKICGVDGIIRYDFKRKDLFDDEWYIETTGGSFSNINCLADIFDLTKTKTTSIWDLYNTFGIEATKQFLIQELKTVMDGVDICHIKLLVERMTYSGTIEPITRYTMRNDESPLSRASFEESFETFLKAAKFKEIEPFTGVSASVIGGKKTEVGTYMCDILIDMEKLNLGDLKTIEDDDEYDYEDDGDLVYVE</sequence>
<organism>
    <name type="scientific">Invertebrate iridescent virus 6</name>
    <name type="common">IIV-6</name>
    <name type="synonym">Chilo iridescent virus</name>
    <dbReference type="NCBI Taxonomy" id="176652"/>
    <lineage>
        <taxon>Viruses</taxon>
        <taxon>Varidnaviria</taxon>
        <taxon>Bamfordvirae</taxon>
        <taxon>Nucleocytoviricota</taxon>
        <taxon>Megaviricetes</taxon>
        <taxon>Pimascovirales</taxon>
        <taxon>Iridoviridae</taxon>
        <taxon>Betairidovirinae</taxon>
        <taxon>Iridovirus</taxon>
    </lineage>
</organism>
<evidence type="ECO:0000250" key="1"/>
<evidence type="ECO:0000305" key="2"/>
<gene>
    <name type="ORF">IIV6-343L</name>
</gene>
<keyword id="KW-0240">DNA-directed RNA polymerase</keyword>
<keyword id="KW-0548">Nucleotidyltransferase</keyword>
<keyword id="KW-1185">Reference proteome</keyword>
<keyword id="KW-0804">Transcription</keyword>
<keyword id="KW-0808">Transferase</keyword>
<accession>Q91FI1</accession>